<reference key="1">
    <citation type="journal article" date="2002" name="Environ. Microbiol.">
        <title>Complete genome sequence and comparative analysis of the metabolically versatile Pseudomonas putida KT2440.</title>
        <authorList>
            <person name="Nelson K.E."/>
            <person name="Weinel C."/>
            <person name="Paulsen I.T."/>
            <person name="Dodson R.J."/>
            <person name="Hilbert H."/>
            <person name="Martins dos Santos V.A.P."/>
            <person name="Fouts D.E."/>
            <person name="Gill S.R."/>
            <person name="Pop M."/>
            <person name="Holmes M."/>
            <person name="Brinkac L.M."/>
            <person name="Beanan M.J."/>
            <person name="DeBoy R.T."/>
            <person name="Daugherty S.C."/>
            <person name="Kolonay J.F."/>
            <person name="Madupu R."/>
            <person name="Nelson W.C."/>
            <person name="White O."/>
            <person name="Peterson J.D."/>
            <person name="Khouri H.M."/>
            <person name="Hance I."/>
            <person name="Chris Lee P."/>
            <person name="Holtzapple E.K."/>
            <person name="Scanlan D."/>
            <person name="Tran K."/>
            <person name="Moazzez A."/>
            <person name="Utterback T.R."/>
            <person name="Rizzo M."/>
            <person name="Lee K."/>
            <person name="Kosack D."/>
            <person name="Moestl D."/>
            <person name="Wedler H."/>
            <person name="Lauber J."/>
            <person name="Stjepandic D."/>
            <person name="Hoheisel J."/>
            <person name="Straetz M."/>
            <person name="Heim S."/>
            <person name="Kiewitz C."/>
            <person name="Eisen J.A."/>
            <person name="Timmis K.N."/>
            <person name="Duesterhoeft A."/>
            <person name="Tuemmler B."/>
            <person name="Fraser C.M."/>
        </authorList>
    </citation>
    <scope>NUCLEOTIDE SEQUENCE [LARGE SCALE GENOMIC DNA]</scope>
    <source>
        <strain>ATCC 47054 / DSM 6125 / CFBP 8728 / NCIMB 11950 / KT2440</strain>
    </source>
</reference>
<keyword id="KW-0963">Cytoplasm</keyword>
<keyword id="KW-0444">Lipid biosynthesis</keyword>
<keyword id="KW-0443">Lipid metabolism</keyword>
<keyword id="KW-0594">Phospholipid biosynthesis</keyword>
<keyword id="KW-1208">Phospholipid metabolism</keyword>
<keyword id="KW-1185">Reference proteome</keyword>
<keyword id="KW-0808">Transferase</keyword>
<name>PLSX_PSEPK</name>
<protein>
    <recommendedName>
        <fullName evidence="1">Phosphate acyltransferase</fullName>
        <ecNumber evidence="1">2.3.1.274</ecNumber>
    </recommendedName>
    <alternativeName>
        <fullName evidence="1">Acyl-ACP phosphotransacylase</fullName>
    </alternativeName>
    <alternativeName>
        <fullName evidence="1">Acyl-[acyl-carrier-protein]--phosphate acyltransferase</fullName>
    </alternativeName>
    <alternativeName>
        <fullName evidence="1">Phosphate-acyl-ACP acyltransferase</fullName>
    </alternativeName>
</protein>
<organism>
    <name type="scientific">Pseudomonas putida (strain ATCC 47054 / DSM 6125 / CFBP 8728 / NCIMB 11950 / KT2440)</name>
    <dbReference type="NCBI Taxonomy" id="160488"/>
    <lineage>
        <taxon>Bacteria</taxon>
        <taxon>Pseudomonadati</taxon>
        <taxon>Pseudomonadota</taxon>
        <taxon>Gammaproteobacteria</taxon>
        <taxon>Pseudomonadales</taxon>
        <taxon>Pseudomonadaceae</taxon>
        <taxon>Pseudomonas</taxon>
    </lineage>
</organism>
<proteinExistence type="inferred from homology"/>
<sequence length="336" mass="35094">MSAQVIAIDAMGGDFGPRSIVQASIACLSATPSLHLTLVGQPSLLEDLISGLPAADRARLQVVAASEVVGMDERPSQALRGKPDSSMRIALELVRDGKAQACVSAGNTGALMALSRFVLKTLPGIDRPAMVAAIPTQTGYCQLLDLGANVDCSAENLYQFAVMGSVAAQALGVHRPRVALLNIGTEDIKGNQQVKLAATLLQSARGLNYVGFVEGDGLYRGEADVVVCDGFVGNILLKSSEGLATMIGARIEKLFKGGAFARVAGAVAMPLLKRLQADLAPARHNGASFLGLQGIVIKSHGSAGVQGFQSAIQRALIEIQENLPQRLHGRLEDLLP</sequence>
<gene>
    <name evidence="1" type="primary">plsX</name>
    <name type="ordered locus">PP_1912</name>
</gene>
<comment type="function">
    <text evidence="1">Catalyzes the reversible formation of acyl-phosphate (acyl-PO(4)) from acyl-[acyl-carrier-protein] (acyl-ACP). This enzyme utilizes acyl-ACP as fatty acyl donor, but not acyl-CoA.</text>
</comment>
<comment type="catalytic activity">
    <reaction evidence="1">
        <text>a fatty acyl-[ACP] + phosphate = an acyl phosphate + holo-[ACP]</text>
        <dbReference type="Rhea" id="RHEA:42292"/>
        <dbReference type="Rhea" id="RHEA-COMP:9685"/>
        <dbReference type="Rhea" id="RHEA-COMP:14125"/>
        <dbReference type="ChEBI" id="CHEBI:43474"/>
        <dbReference type="ChEBI" id="CHEBI:59918"/>
        <dbReference type="ChEBI" id="CHEBI:64479"/>
        <dbReference type="ChEBI" id="CHEBI:138651"/>
        <dbReference type="EC" id="2.3.1.274"/>
    </reaction>
</comment>
<comment type="pathway">
    <text evidence="1">Lipid metabolism; phospholipid metabolism.</text>
</comment>
<comment type="subunit">
    <text evidence="1">Homodimer. Probably interacts with PlsY.</text>
</comment>
<comment type="subcellular location">
    <subcellularLocation>
        <location evidence="1">Cytoplasm</location>
    </subcellularLocation>
    <text evidence="1">Associated with the membrane possibly through PlsY.</text>
</comment>
<comment type="similarity">
    <text evidence="1">Belongs to the PlsX family.</text>
</comment>
<dbReference type="EC" id="2.3.1.274" evidence="1"/>
<dbReference type="EMBL" id="AE015451">
    <property type="protein sequence ID" value="AAN67530.1"/>
    <property type="molecule type" value="Genomic_DNA"/>
</dbReference>
<dbReference type="RefSeq" id="NP_744066.1">
    <property type="nucleotide sequence ID" value="NC_002947.4"/>
</dbReference>
<dbReference type="RefSeq" id="WP_010952935.1">
    <property type="nucleotide sequence ID" value="NZ_CP169744.1"/>
</dbReference>
<dbReference type="SMR" id="Q88LL8"/>
<dbReference type="STRING" id="160488.PP_1912"/>
<dbReference type="PaxDb" id="160488-PP_1912"/>
<dbReference type="GeneID" id="83681543"/>
<dbReference type="KEGG" id="ppu:PP_1912"/>
<dbReference type="PATRIC" id="fig|160488.4.peg.2020"/>
<dbReference type="eggNOG" id="COG0416">
    <property type="taxonomic scope" value="Bacteria"/>
</dbReference>
<dbReference type="HOGENOM" id="CLU_039379_1_0_6"/>
<dbReference type="OrthoDB" id="9806408at2"/>
<dbReference type="PhylomeDB" id="Q88LL8"/>
<dbReference type="BioCyc" id="PPUT160488:G1G01-2024-MONOMER"/>
<dbReference type="UniPathway" id="UPA00085"/>
<dbReference type="Proteomes" id="UP000000556">
    <property type="component" value="Chromosome"/>
</dbReference>
<dbReference type="GO" id="GO:0005737">
    <property type="term" value="C:cytoplasm"/>
    <property type="evidence" value="ECO:0007669"/>
    <property type="project" value="UniProtKB-SubCell"/>
</dbReference>
<dbReference type="GO" id="GO:0043811">
    <property type="term" value="F:phosphate:acyl-[acyl carrier protein] acyltransferase activity"/>
    <property type="evidence" value="ECO:0007669"/>
    <property type="project" value="UniProtKB-UniRule"/>
</dbReference>
<dbReference type="GO" id="GO:0006633">
    <property type="term" value="P:fatty acid biosynthetic process"/>
    <property type="evidence" value="ECO:0007669"/>
    <property type="project" value="UniProtKB-UniRule"/>
</dbReference>
<dbReference type="GO" id="GO:0008654">
    <property type="term" value="P:phospholipid biosynthetic process"/>
    <property type="evidence" value="ECO:0007669"/>
    <property type="project" value="UniProtKB-KW"/>
</dbReference>
<dbReference type="Gene3D" id="3.40.718.10">
    <property type="entry name" value="Isopropylmalate Dehydrogenase"/>
    <property type="match status" value="1"/>
</dbReference>
<dbReference type="HAMAP" id="MF_00019">
    <property type="entry name" value="PlsX"/>
    <property type="match status" value="1"/>
</dbReference>
<dbReference type="InterPro" id="IPR003664">
    <property type="entry name" value="FA_synthesis"/>
</dbReference>
<dbReference type="InterPro" id="IPR012281">
    <property type="entry name" value="Phospholipid_synth_PlsX-like"/>
</dbReference>
<dbReference type="NCBIfam" id="TIGR00182">
    <property type="entry name" value="plsX"/>
    <property type="match status" value="1"/>
</dbReference>
<dbReference type="PANTHER" id="PTHR30100">
    <property type="entry name" value="FATTY ACID/PHOSPHOLIPID SYNTHESIS PROTEIN PLSX"/>
    <property type="match status" value="1"/>
</dbReference>
<dbReference type="PANTHER" id="PTHR30100:SF1">
    <property type="entry name" value="PHOSPHATE ACYLTRANSFERASE"/>
    <property type="match status" value="1"/>
</dbReference>
<dbReference type="Pfam" id="PF02504">
    <property type="entry name" value="FA_synthesis"/>
    <property type="match status" value="1"/>
</dbReference>
<dbReference type="PIRSF" id="PIRSF002465">
    <property type="entry name" value="Phsphlp_syn_PlsX"/>
    <property type="match status" value="1"/>
</dbReference>
<dbReference type="SUPFAM" id="SSF53659">
    <property type="entry name" value="Isocitrate/Isopropylmalate dehydrogenase-like"/>
    <property type="match status" value="1"/>
</dbReference>
<feature type="chain" id="PRO_0000189923" description="Phosphate acyltransferase">
    <location>
        <begin position="1"/>
        <end position="336"/>
    </location>
</feature>
<evidence type="ECO:0000255" key="1">
    <source>
        <dbReference type="HAMAP-Rule" id="MF_00019"/>
    </source>
</evidence>
<accession>Q88LL8</accession>